<evidence type="ECO:0000255" key="1">
    <source>
        <dbReference type="HAMAP-Rule" id="MF_00451"/>
    </source>
</evidence>
<gene>
    <name evidence="1" type="primary">ndk</name>
    <name type="ordered locus">XCV2066</name>
</gene>
<accession>Q3BTW6</accession>
<comment type="function">
    <text evidence="1">Major role in the synthesis of nucleoside triphosphates other than ATP. The ATP gamma phosphate is transferred to the NDP beta phosphate via a ping-pong mechanism, using a phosphorylated active-site intermediate.</text>
</comment>
<comment type="catalytic activity">
    <reaction evidence="1">
        <text>a 2'-deoxyribonucleoside 5'-diphosphate + ATP = a 2'-deoxyribonucleoside 5'-triphosphate + ADP</text>
        <dbReference type="Rhea" id="RHEA:44640"/>
        <dbReference type="ChEBI" id="CHEBI:30616"/>
        <dbReference type="ChEBI" id="CHEBI:61560"/>
        <dbReference type="ChEBI" id="CHEBI:73316"/>
        <dbReference type="ChEBI" id="CHEBI:456216"/>
        <dbReference type="EC" id="2.7.4.6"/>
    </reaction>
</comment>
<comment type="catalytic activity">
    <reaction evidence="1">
        <text>a ribonucleoside 5'-diphosphate + ATP = a ribonucleoside 5'-triphosphate + ADP</text>
        <dbReference type="Rhea" id="RHEA:18113"/>
        <dbReference type="ChEBI" id="CHEBI:30616"/>
        <dbReference type="ChEBI" id="CHEBI:57930"/>
        <dbReference type="ChEBI" id="CHEBI:61557"/>
        <dbReference type="ChEBI" id="CHEBI:456216"/>
        <dbReference type="EC" id="2.7.4.6"/>
    </reaction>
</comment>
<comment type="cofactor">
    <cofactor evidence="1">
        <name>Mg(2+)</name>
        <dbReference type="ChEBI" id="CHEBI:18420"/>
    </cofactor>
</comment>
<comment type="subunit">
    <text evidence="1">Homotetramer.</text>
</comment>
<comment type="subcellular location">
    <subcellularLocation>
        <location evidence="1">Cytoplasm</location>
    </subcellularLocation>
</comment>
<comment type="similarity">
    <text evidence="1">Belongs to the NDK family.</text>
</comment>
<reference key="1">
    <citation type="journal article" date="2005" name="J. Bacteriol.">
        <title>Insights into genome plasticity and pathogenicity of the plant pathogenic Bacterium Xanthomonas campestris pv. vesicatoria revealed by the complete genome sequence.</title>
        <authorList>
            <person name="Thieme F."/>
            <person name="Koebnik R."/>
            <person name="Bekel T."/>
            <person name="Berger C."/>
            <person name="Boch J."/>
            <person name="Buettner D."/>
            <person name="Caldana C."/>
            <person name="Gaigalat L."/>
            <person name="Goesmann A."/>
            <person name="Kay S."/>
            <person name="Kirchner O."/>
            <person name="Lanz C."/>
            <person name="Linke B."/>
            <person name="McHardy A.C."/>
            <person name="Meyer F."/>
            <person name="Mittenhuber G."/>
            <person name="Nies D.H."/>
            <person name="Niesbach-Kloesgen U."/>
            <person name="Patschkowski T."/>
            <person name="Rueckert C."/>
            <person name="Rupp O."/>
            <person name="Schneiker S."/>
            <person name="Schuster S.C."/>
            <person name="Vorhoelter F.J."/>
            <person name="Weber E."/>
            <person name="Puehler A."/>
            <person name="Bonas U."/>
            <person name="Bartels D."/>
            <person name="Kaiser O."/>
        </authorList>
    </citation>
    <scope>NUCLEOTIDE SEQUENCE [LARGE SCALE GENOMIC DNA]</scope>
    <source>
        <strain>85-10</strain>
    </source>
</reference>
<name>NDK_XANE5</name>
<organism>
    <name type="scientific">Xanthomonas euvesicatoria pv. vesicatoria (strain 85-10)</name>
    <name type="common">Xanthomonas campestris pv. vesicatoria</name>
    <dbReference type="NCBI Taxonomy" id="316273"/>
    <lineage>
        <taxon>Bacteria</taxon>
        <taxon>Pseudomonadati</taxon>
        <taxon>Pseudomonadota</taxon>
        <taxon>Gammaproteobacteria</taxon>
        <taxon>Lysobacterales</taxon>
        <taxon>Lysobacteraceae</taxon>
        <taxon>Xanthomonas</taxon>
    </lineage>
</organism>
<proteinExistence type="inferred from homology"/>
<keyword id="KW-0067">ATP-binding</keyword>
<keyword id="KW-0963">Cytoplasm</keyword>
<keyword id="KW-0418">Kinase</keyword>
<keyword id="KW-0460">Magnesium</keyword>
<keyword id="KW-0479">Metal-binding</keyword>
<keyword id="KW-0546">Nucleotide metabolism</keyword>
<keyword id="KW-0547">Nucleotide-binding</keyword>
<keyword id="KW-0597">Phosphoprotein</keyword>
<keyword id="KW-0808">Transferase</keyword>
<dbReference type="EC" id="2.7.4.6" evidence="1"/>
<dbReference type="EMBL" id="AM039952">
    <property type="protein sequence ID" value="CAJ23743.1"/>
    <property type="molecule type" value="Genomic_DNA"/>
</dbReference>
<dbReference type="RefSeq" id="WP_002812972.1">
    <property type="nucleotide sequence ID" value="NZ_CP017190.1"/>
</dbReference>
<dbReference type="SMR" id="Q3BTW6"/>
<dbReference type="STRING" id="456327.BJD11_12100"/>
<dbReference type="GeneID" id="98193442"/>
<dbReference type="KEGG" id="xcv:XCV2066"/>
<dbReference type="eggNOG" id="COG0105">
    <property type="taxonomic scope" value="Bacteria"/>
</dbReference>
<dbReference type="HOGENOM" id="CLU_060216_8_1_6"/>
<dbReference type="Proteomes" id="UP000007069">
    <property type="component" value="Chromosome"/>
</dbReference>
<dbReference type="GO" id="GO:0005737">
    <property type="term" value="C:cytoplasm"/>
    <property type="evidence" value="ECO:0007669"/>
    <property type="project" value="UniProtKB-SubCell"/>
</dbReference>
<dbReference type="GO" id="GO:0005524">
    <property type="term" value="F:ATP binding"/>
    <property type="evidence" value="ECO:0007669"/>
    <property type="project" value="UniProtKB-UniRule"/>
</dbReference>
<dbReference type="GO" id="GO:0046872">
    <property type="term" value="F:metal ion binding"/>
    <property type="evidence" value="ECO:0007669"/>
    <property type="project" value="UniProtKB-KW"/>
</dbReference>
<dbReference type="GO" id="GO:0004550">
    <property type="term" value="F:nucleoside diphosphate kinase activity"/>
    <property type="evidence" value="ECO:0007669"/>
    <property type="project" value="UniProtKB-UniRule"/>
</dbReference>
<dbReference type="GO" id="GO:0006241">
    <property type="term" value="P:CTP biosynthetic process"/>
    <property type="evidence" value="ECO:0007669"/>
    <property type="project" value="UniProtKB-UniRule"/>
</dbReference>
<dbReference type="GO" id="GO:0006183">
    <property type="term" value="P:GTP biosynthetic process"/>
    <property type="evidence" value="ECO:0007669"/>
    <property type="project" value="UniProtKB-UniRule"/>
</dbReference>
<dbReference type="GO" id="GO:0006228">
    <property type="term" value="P:UTP biosynthetic process"/>
    <property type="evidence" value="ECO:0007669"/>
    <property type="project" value="UniProtKB-UniRule"/>
</dbReference>
<dbReference type="CDD" id="cd04413">
    <property type="entry name" value="NDPk_I"/>
    <property type="match status" value="1"/>
</dbReference>
<dbReference type="FunFam" id="3.30.70.141:FF:000001">
    <property type="entry name" value="Nucleoside diphosphate kinase"/>
    <property type="match status" value="1"/>
</dbReference>
<dbReference type="Gene3D" id="3.30.70.141">
    <property type="entry name" value="Nucleoside diphosphate kinase-like domain"/>
    <property type="match status" value="1"/>
</dbReference>
<dbReference type="HAMAP" id="MF_00451">
    <property type="entry name" value="NDP_kinase"/>
    <property type="match status" value="1"/>
</dbReference>
<dbReference type="InterPro" id="IPR034907">
    <property type="entry name" value="NDK-like_dom"/>
</dbReference>
<dbReference type="InterPro" id="IPR036850">
    <property type="entry name" value="NDK-like_dom_sf"/>
</dbReference>
<dbReference type="InterPro" id="IPR001564">
    <property type="entry name" value="Nucleoside_diP_kinase"/>
</dbReference>
<dbReference type="InterPro" id="IPR023005">
    <property type="entry name" value="Nucleoside_diP_kinase_AS"/>
</dbReference>
<dbReference type="NCBIfam" id="NF001908">
    <property type="entry name" value="PRK00668.1"/>
    <property type="match status" value="1"/>
</dbReference>
<dbReference type="PANTHER" id="PTHR11349">
    <property type="entry name" value="NUCLEOSIDE DIPHOSPHATE KINASE"/>
    <property type="match status" value="1"/>
</dbReference>
<dbReference type="Pfam" id="PF00334">
    <property type="entry name" value="NDK"/>
    <property type="match status" value="1"/>
</dbReference>
<dbReference type="PRINTS" id="PR01243">
    <property type="entry name" value="NUCDPKINASE"/>
</dbReference>
<dbReference type="SMART" id="SM00562">
    <property type="entry name" value="NDK"/>
    <property type="match status" value="1"/>
</dbReference>
<dbReference type="SUPFAM" id="SSF54919">
    <property type="entry name" value="Nucleoside diphosphate kinase, NDK"/>
    <property type="match status" value="1"/>
</dbReference>
<dbReference type="PROSITE" id="PS00469">
    <property type="entry name" value="NDPK"/>
    <property type="match status" value="1"/>
</dbReference>
<dbReference type="PROSITE" id="PS51374">
    <property type="entry name" value="NDPK_LIKE"/>
    <property type="match status" value="1"/>
</dbReference>
<sequence length="141" mass="15257">MALERTLSIIKPDAVAKNVIGEIYSRFEKAGLKVVAAKYKQLSRREAEGFYAVHRERPFFNALVEFMISGPVMIQALEGENAVAAHRDLLGATNPKDAAPGTIRADFADSIDANAAHGSDSVENAANEVAYFFAATEVVSR</sequence>
<feature type="chain" id="PRO_0000226587" description="Nucleoside diphosphate kinase">
    <location>
        <begin position="1"/>
        <end position="141"/>
    </location>
</feature>
<feature type="active site" description="Pros-phosphohistidine intermediate" evidence="1">
    <location>
        <position position="117"/>
    </location>
</feature>
<feature type="binding site" evidence="1">
    <location>
        <position position="11"/>
    </location>
    <ligand>
        <name>ATP</name>
        <dbReference type="ChEBI" id="CHEBI:30616"/>
    </ligand>
</feature>
<feature type="binding site" evidence="1">
    <location>
        <position position="59"/>
    </location>
    <ligand>
        <name>ATP</name>
        <dbReference type="ChEBI" id="CHEBI:30616"/>
    </ligand>
</feature>
<feature type="binding site" evidence="1">
    <location>
        <position position="87"/>
    </location>
    <ligand>
        <name>ATP</name>
        <dbReference type="ChEBI" id="CHEBI:30616"/>
    </ligand>
</feature>
<feature type="binding site" evidence="1">
    <location>
        <position position="93"/>
    </location>
    <ligand>
        <name>ATP</name>
        <dbReference type="ChEBI" id="CHEBI:30616"/>
    </ligand>
</feature>
<feature type="binding site" evidence="1">
    <location>
        <position position="104"/>
    </location>
    <ligand>
        <name>ATP</name>
        <dbReference type="ChEBI" id="CHEBI:30616"/>
    </ligand>
</feature>
<feature type="binding site" evidence="1">
    <location>
        <position position="114"/>
    </location>
    <ligand>
        <name>ATP</name>
        <dbReference type="ChEBI" id="CHEBI:30616"/>
    </ligand>
</feature>
<protein>
    <recommendedName>
        <fullName evidence="1">Nucleoside diphosphate kinase</fullName>
        <shortName evidence="1">NDK</shortName>
        <shortName evidence="1">NDP kinase</shortName>
        <ecNumber evidence="1">2.7.4.6</ecNumber>
    </recommendedName>
    <alternativeName>
        <fullName evidence="1">Nucleoside-2-P kinase</fullName>
    </alternativeName>
</protein>